<accession>Q04561</accession>
<gene>
    <name type="primary">rep</name>
    <name type="ORF">1a-1b</name>
</gene>
<dbReference type="EC" id="3.4.22.-"/>
<dbReference type="EC" id="3.4.19.12"/>
<dbReference type="EC" id="3.4.21.-" evidence="23"/>
<dbReference type="EC" id="2.7.7.48"/>
<dbReference type="EC" id="3.6.4.12"/>
<dbReference type="EC" id="3.6.4.13"/>
<dbReference type="EC" id="4.6.1.-"/>
<dbReference type="EMBL" id="M96262">
    <property type="protein sequence ID" value="AAA46273.2"/>
    <property type="status" value="ALT_INIT"/>
    <property type="molecule type" value="Genomic_RNA"/>
</dbReference>
<dbReference type="EMBL" id="M96262">
    <property type="protein sequence ID" value="AAA46274.1"/>
    <property type="status" value="ALT_INIT"/>
    <property type="molecule type" value="Genomic_RNA"/>
</dbReference>
<dbReference type="EMBL" id="L04493">
    <property type="protein sequence ID" value="AAA47101.1"/>
    <property type="molecule type" value="Genomic_RNA"/>
</dbReference>
<dbReference type="PIR" id="A36861">
    <property type="entry name" value="A36861"/>
</dbReference>
<dbReference type="PIR" id="A45392">
    <property type="entry name" value="A45392"/>
</dbReference>
<dbReference type="PIR" id="B36861">
    <property type="entry name" value="B36861"/>
</dbReference>
<dbReference type="SMR" id="Q04561"/>
<dbReference type="IntAct" id="Q04561">
    <property type="interactions" value="2"/>
</dbReference>
<dbReference type="MEROPS" id="C32.001"/>
<dbReference type="MEROPS" id="S32.002"/>
<dbReference type="Proteomes" id="UP000006687">
    <property type="component" value="Segment"/>
</dbReference>
<dbReference type="GO" id="GO:0044165">
    <property type="term" value="C:host cell endoplasmic reticulum"/>
    <property type="evidence" value="ECO:0007669"/>
    <property type="project" value="UniProtKB-SubCell"/>
</dbReference>
<dbReference type="GO" id="GO:0033644">
    <property type="term" value="C:host cell membrane"/>
    <property type="evidence" value="ECO:0007669"/>
    <property type="project" value="UniProtKB-SubCell"/>
</dbReference>
<dbReference type="GO" id="GO:0042025">
    <property type="term" value="C:host cell nucleus"/>
    <property type="evidence" value="ECO:0007669"/>
    <property type="project" value="UniProtKB-SubCell"/>
</dbReference>
<dbReference type="GO" id="GO:0044220">
    <property type="term" value="C:host cell perinuclear region of cytoplasm"/>
    <property type="evidence" value="ECO:0007669"/>
    <property type="project" value="UniProtKB-SubCell"/>
</dbReference>
<dbReference type="GO" id="GO:0016020">
    <property type="term" value="C:membrane"/>
    <property type="evidence" value="ECO:0007669"/>
    <property type="project" value="UniProtKB-KW"/>
</dbReference>
<dbReference type="GO" id="GO:0005524">
    <property type="term" value="F:ATP binding"/>
    <property type="evidence" value="ECO:0007669"/>
    <property type="project" value="UniProtKB-KW"/>
</dbReference>
<dbReference type="GO" id="GO:0016887">
    <property type="term" value="F:ATP hydrolysis activity"/>
    <property type="evidence" value="ECO:0007669"/>
    <property type="project" value="RHEA"/>
</dbReference>
<dbReference type="GO" id="GO:0004843">
    <property type="term" value="F:cysteine-type deubiquitinase activity"/>
    <property type="evidence" value="ECO:0007669"/>
    <property type="project" value="UniProtKB-EC"/>
</dbReference>
<dbReference type="GO" id="GO:0004197">
    <property type="term" value="F:cysteine-type endopeptidase activity"/>
    <property type="evidence" value="ECO:0007669"/>
    <property type="project" value="InterPro"/>
</dbReference>
<dbReference type="GO" id="GO:0004519">
    <property type="term" value="F:endonuclease activity"/>
    <property type="evidence" value="ECO:0007669"/>
    <property type="project" value="UniProtKB-KW"/>
</dbReference>
<dbReference type="GO" id="GO:0016829">
    <property type="term" value="F:lyase activity"/>
    <property type="evidence" value="ECO:0007669"/>
    <property type="project" value="UniProtKB-KW"/>
</dbReference>
<dbReference type="GO" id="GO:0030291">
    <property type="term" value="F:protein serine/threonine kinase inhibitor activity"/>
    <property type="evidence" value="ECO:0007669"/>
    <property type="project" value="UniProtKB-KW"/>
</dbReference>
<dbReference type="GO" id="GO:0003723">
    <property type="term" value="F:RNA binding"/>
    <property type="evidence" value="ECO:0007669"/>
    <property type="project" value="InterPro"/>
</dbReference>
<dbReference type="GO" id="GO:0003724">
    <property type="term" value="F:RNA helicase activity"/>
    <property type="evidence" value="ECO:0007669"/>
    <property type="project" value="UniProtKB-EC"/>
</dbReference>
<dbReference type="GO" id="GO:0004540">
    <property type="term" value="F:RNA nuclease activity"/>
    <property type="evidence" value="ECO:0007669"/>
    <property type="project" value="UniProtKB-ARBA"/>
</dbReference>
<dbReference type="GO" id="GO:0003968">
    <property type="term" value="F:RNA-directed RNA polymerase activity"/>
    <property type="evidence" value="ECO:0007669"/>
    <property type="project" value="UniProtKB-KW"/>
</dbReference>
<dbReference type="GO" id="GO:0004252">
    <property type="term" value="F:serine-type endopeptidase activity"/>
    <property type="evidence" value="ECO:0007669"/>
    <property type="project" value="InterPro"/>
</dbReference>
<dbReference type="GO" id="GO:0008270">
    <property type="term" value="F:zinc ion binding"/>
    <property type="evidence" value="ECO:0007669"/>
    <property type="project" value="UniProtKB-KW"/>
</dbReference>
<dbReference type="GO" id="GO:0006351">
    <property type="term" value="P:DNA-templated transcription"/>
    <property type="evidence" value="ECO:0007669"/>
    <property type="project" value="InterPro"/>
</dbReference>
<dbReference type="GO" id="GO:0006508">
    <property type="term" value="P:proteolysis"/>
    <property type="evidence" value="ECO:0007669"/>
    <property type="project" value="UniProtKB-KW"/>
</dbReference>
<dbReference type="GO" id="GO:0039520">
    <property type="term" value="P:symbiont-mediated activation of host autophagy"/>
    <property type="evidence" value="ECO:0007669"/>
    <property type="project" value="UniProtKB-KW"/>
</dbReference>
<dbReference type="GO" id="GO:0039648">
    <property type="term" value="P:symbiont-mediated perturbation of host ubiquitin-like protein modification"/>
    <property type="evidence" value="ECO:0007669"/>
    <property type="project" value="UniProtKB-KW"/>
</dbReference>
<dbReference type="GO" id="GO:0039579">
    <property type="term" value="P:symbiont-mediated suppression of host ISG15-protein conjugation"/>
    <property type="evidence" value="ECO:0007669"/>
    <property type="project" value="UniProtKB-KW"/>
</dbReference>
<dbReference type="GO" id="GO:0039563">
    <property type="term" value="P:symbiont-mediated suppression of host JAK-STAT cascade via inhibition of STAT1 activity"/>
    <property type="evidence" value="ECO:0007669"/>
    <property type="project" value="UniProtKB-KW"/>
</dbReference>
<dbReference type="GO" id="GO:0085034">
    <property type="term" value="P:symbiont-mediated suppression of host NF-kappaB cascade"/>
    <property type="evidence" value="ECO:0007669"/>
    <property type="project" value="UniProtKB-KW"/>
</dbReference>
<dbReference type="GO" id="GO:0039580">
    <property type="term" value="P:symbiont-mediated suppression of host PKR/eIFalpha signaling"/>
    <property type="evidence" value="ECO:0007669"/>
    <property type="project" value="UniProtKB-KW"/>
</dbReference>
<dbReference type="GO" id="GO:0039502">
    <property type="term" value="P:symbiont-mediated suppression of host type I interferon-mediated signaling pathway"/>
    <property type="evidence" value="ECO:0007669"/>
    <property type="project" value="UniProtKB-KW"/>
</dbReference>
<dbReference type="GO" id="GO:0019082">
    <property type="term" value="P:viral protein processing"/>
    <property type="evidence" value="ECO:0007669"/>
    <property type="project" value="InterPro"/>
</dbReference>
<dbReference type="GO" id="GO:0039694">
    <property type="term" value="P:viral RNA genome replication"/>
    <property type="evidence" value="ECO:0007669"/>
    <property type="project" value="InterPro"/>
</dbReference>
<dbReference type="GO" id="GO:0075523">
    <property type="term" value="P:viral translational frameshifting"/>
    <property type="evidence" value="ECO:0007669"/>
    <property type="project" value="UniProtKB-KW"/>
</dbReference>
<dbReference type="CDD" id="cd21410">
    <property type="entry name" value="1B_av_Nsp10-like"/>
    <property type="match status" value="1"/>
</dbReference>
<dbReference type="CDD" id="cd23189">
    <property type="entry name" value="Arteriviridae_RdRp"/>
    <property type="match status" value="1"/>
</dbReference>
<dbReference type="CDD" id="cd22528">
    <property type="entry name" value="av_Nsp3_ER-remodelling"/>
    <property type="match status" value="1"/>
</dbReference>
<dbReference type="CDD" id="cd17937">
    <property type="entry name" value="DEXXYc_viral_SF1-N"/>
    <property type="match status" value="1"/>
</dbReference>
<dbReference type="CDD" id="cd21160">
    <property type="entry name" value="NendoU_av_Nsp11-like"/>
    <property type="match status" value="1"/>
</dbReference>
<dbReference type="CDD" id="cd21166">
    <property type="entry name" value="NTD_av_Nsp11-like"/>
    <property type="match status" value="1"/>
</dbReference>
<dbReference type="CDD" id="cd18786">
    <property type="entry name" value="SF1_C"/>
    <property type="match status" value="1"/>
</dbReference>
<dbReference type="CDD" id="cd21405">
    <property type="entry name" value="ZBD_av_Nsp10-like"/>
    <property type="match status" value="1"/>
</dbReference>
<dbReference type="FunFam" id="3.30.1330.220:FF:000001">
    <property type="entry name" value="ORF1a polyprotein"/>
    <property type="match status" value="1"/>
</dbReference>
<dbReference type="FunFam" id="3.90.70.160:FF:000001">
    <property type="entry name" value="ORF1a polyprotein"/>
    <property type="match status" value="1"/>
</dbReference>
<dbReference type="FunFam" id="3.90.70.60:FF:000001">
    <property type="entry name" value="Polyprotein 1a"/>
    <property type="match status" value="1"/>
</dbReference>
<dbReference type="FunFam" id="2.30.31.30:FF:000001">
    <property type="entry name" value="Replicase polyprotein 1ab"/>
    <property type="match status" value="1"/>
</dbReference>
<dbReference type="FunFam" id="3.40.50.300:FF:004600">
    <property type="entry name" value="Replicase polyprotein 1ab"/>
    <property type="match status" value="1"/>
</dbReference>
<dbReference type="Gene3D" id="3.90.70.160">
    <property type="match status" value="1"/>
</dbReference>
<dbReference type="Gene3D" id="4.10.80.390">
    <property type="match status" value="1"/>
</dbReference>
<dbReference type="Gene3D" id="3.30.1330.220">
    <property type="entry name" value="Arterivirus nonstructural protein 7 alpha"/>
    <property type="match status" value="1"/>
</dbReference>
<dbReference type="Gene3D" id="2.30.31.30">
    <property type="entry name" value="Arterivirus nps1beta, nuclease domain"/>
    <property type="match status" value="1"/>
</dbReference>
<dbReference type="Gene3D" id="3.90.70.70">
    <property type="entry name" value="Arterivirus papain-like cysteine protease beta domain"/>
    <property type="match status" value="1"/>
</dbReference>
<dbReference type="Gene3D" id="3.30.40.20">
    <property type="entry name" value="Chymotrypsin-like serine protease, domain 3"/>
    <property type="match status" value="1"/>
</dbReference>
<dbReference type="Gene3D" id="3.40.50.300">
    <property type="entry name" value="P-loop containing nucleotide triphosphate hydrolases"/>
    <property type="match status" value="2"/>
</dbReference>
<dbReference type="Gene3D" id="3.90.70.60">
    <property type="entry name" value="Porcine arterivirus-type cysteine proteinase alpha domain"/>
    <property type="match status" value="1"/>
</dbReference>
<dbReference type="Gene3D" id="2.40.10.10">
    <property type="entry name" value="Trypsin-like serine proteases"/>
    <property type="match status" value="2"/>
</dbReference>
<dbReference type="InterPro" id="IPR027351">
    <property type="entry name" value="(+)RNA_virus_helicase_core_dom"/>
</dbReference>
<dbReference type="InterPro" id="IPR031932">
    <property type="entry name" value="Arteri_nsp7a"/>
</dbReference>
<dbReference type="InterPro" id="IPR038451">
    <property type="entry name" value="Arteri_nsp7a_sf"/>
</dbReference>
<dbReference type="InterPro" id="IPR008743">
    <property type="entry name" value="Arterivirus_Nsp2_C33"/>
</dbReference>
<dbReference type="InterPro" id="IPR023338">
    <property type="entry name" value="Arterivirus_NSP4_peptidase"/>
</dbReference>
<dbReference type="InterPro" id="IPR046440">
    <property type="entry name" value="AV_NSP11N_COV_NSP15M"/>
</dbReference>
<dbReference type="InterPro" id="IPR008741">
    <property type="entry name" value="AV_PCPalpha"/>
</dbReference>
<dbReference type="InterPro" id="IPR038155">
    <property type="entry name" value="AV_PCPalpha_sf"/>
</dbReference>
<dbReference type="InterPro" id="IPR025773">
    <property type="entry name" value="AV_PCPbeta"/>
</dbReference>
<dbReference type="InterPro" id="IPR038154">
    <property type="entry name" value="AV_PCPbeta_sf"/>
</dbReference>
<dbReference type="InterPro" id="IPR023183">
    <property type="entry name" value="Chymotrypsin-like_C"/>
</dbReference>
<dbReference type="InterPro" id="IPR043502">
    <property type="entry name" value="DNA/RNA_pol_sf"/>
</dbReference>
<dbReference type="InterPro" id="IPR008760">
    <property type="entry name" value="EAV_peptidase_S32"/>
</dbReference>
<dbReference type="InterPro" id="IPR037227">
    <property type="entry name" value="EndoU-like"/>
</dbReference>
<dbReference type="InterPro" id="IPR043609">
    <property type="entry name" value="NendoU_nidovirus"/>
</dbReference>
<dbReference type="InterPro" id="IPR044863">
    <property type="entry name" value="NIRAN"/>
</dbReference>
<dbReference type="InterPro" id="IPR044348">
    <property type="entry name" value="NSP10_1B_Av"/>
</dbReference>
<dbReference type="InterPro" id="IPR027355">
    <property type="entry name" value="NSP10_Av_ZBD"/>
</dbReference>
<dbReference type="InterPro" id="IPR044320">
    <property type="entry name" value="NSP11_Av_N"/>
</dbReference>
<dbReference type="InterPro" id="IPR044314">
    <property type="entry name" value="NSP11_NendoU_Av"/>
</dbReference>
<dbReference type="InterPro" id="IPR054104">
    <property type="entry name" value="Nsp1alpha_Znf"/>
</dbReference>
<dbReference type="InterPro" id="IPR032855">
    <property type="entry name" value="NSP2-B_epitope"/>
</dbReference>
<dbReference type="InterPro" id="IPR032841">
    <property type="entry name" value="NSP2_assoc"/>
</dbReference>
<dbReference type="InterPro" id="IPR027417">
    <property type="entry name" value="P-loop_NTPase"/>
</dbReference>
<dbReference type="InterPro" id="IPR009003">
    <property type="entry name" value="Peptidase_S1_PA"/>
</dbReference>
<dbReference type="InterPro" id="IPR043504">
    <property type="entry name" value="Peptidase_S1_PA_chymotrypsin"/>
</dbReference>
<dbReference type="InterPro" id="IPR001205">
    <property type="entry name" value="RNA-dir_pol_C"/>
</dbReference>
<dbReference type="InterPro" id="IPR007094">
    <property type="entry name" value="RNA-dir_pol_PSvirus"/>
</dbReference>
<dbReference type="Pfam" id="PF16749">
    <property type="entry name" value="Arteri_nsp7a"/>
    <property type="match status" value="1"/>
</dbReference>
<dbReference type="Pfam" id="PF14757">
    <property type="entry name" value="NSP2-B_epitope"/>
    <property type="match status" value="1"/>
</dbReference>
<dbReference type="Pfam" id="PF14758">
    <property type="entry name" value="NSP2_assoc"/>
    <property type="match status" value="1"/>
</dbReference>
<dbReference type="Pfam" id="PF05410">
    <property type="entry name" value="Peptidase_C31"/>
    <property type="match status" value="1"/>
</dbReference>
<dbReference type="Pfam" id="PF05411">
    <property type="entry name" value="Peptidase_C32"/>
    <property type="match status" value="1"/>
</dbReference>
<dbReference type="Pfam" id="PF05412">
    <property type="entry name" value="Peptidase_C33"/>
    <property type="match status" value="1"/>
</dbReference>
<dbReference type="Pfam" id="PF05579">
    <property type="entry name" value="Peptidase_S32"/>
    <property type="match status" value="1"/>
</dbReference>
<dbReference type="Pfam" id="PF22049">
    <property type="entry name" value="PRRSV-NSP11_N"/>
    <property type="match status" value="1"/>
</dbReference>
<dbReference type="Pfam" id="PF00680">
    <property type="entry name" value="RdRP_1"/>
    <property type="match status" value="1"/>
</dbReference>
<dbReference type="Pfam" id="PF01443">
    <property type="entry name" value="Viral_helicase1"/>
    <property type="match status" value="1"/>
</dbReference>
<dbReference type="Pfam" id="PF21905">
    <property type="entry name" value="Zf-Nsp1alpha"/>
    <property type="match status" value="1"/>
</dbReference>
<dbReference type="SUPFAM" id="SSF56672">
    <property type="entry name" value="DNA/RNA polymerases"/>
    <property type="match status" value="1"/>
</dbReference>
<dbReference type="SUPFAM" id="SSF142877">
    <property type="entry name" value="EndoU-like"/>
    <property type="match status" value="1"/>
</dbReference>
<dbReference type="SUPFAM" id="SSF52540">
    <property type="entry name" value="P-loop containing nucleoside triphosphate hydrolases"/>
    <property type="match status" value="1"/>
</dbReference>
<dbReference type="SUPFAM" id="SSF50494">
    <property type="entry name" value="Trypsin-like serine proteases"/>
    <property type="match status" value="1"/>
</dbReference>
<dbReference type="PROSITE" id="PS51538">
    <property type="entry name" value="AV_CP"/>
    <property type="match status" value="1"/>
</dbReference>
<dbReference type="PROSITE" id="PS51961">
    <property type="entry name" value="AV_NSP11N_COV_NSP15M"/>
    <property type="match status" value="1"/>
</dbReference>
<dbReference type="PROSITE" id="PS51493">
    <property type="entry name" value="AV_NSP4_PRO"/>
    <property type="match status" value="1"/>
</dbReference>
<dbReference type="PROSITE" id="PS51539">
    <property type="entry name" value="AV_PCP_ALPHA"/>
    <property type="match status" value="1"/>
</dbReference>
<dbReference type="PROSITE" id="PS51540">
    <property type="entry name" value="AV_PCP_BETA"/>
    <property type="match status" value="1"/>
</dbReference>
<dbReference type="PROSITE" id="PS51652">
    <property type="entry name" value="AV_ZBD"/>
    <property type="match status" value="1"/>
</dbReference>
<dbReference type="PROSITE" id="PS51958">
    <property type="entry name" value="NENDOU"/>
    <property type="match status" value="1"/>
</dbReference>
<dbReference type="PROSITE" id="PS51947">
    <property type="entry name" value="NIRAN"/>
    <property type="match status" value="1"/>
</dbReference>
<dbReference type="PROSITE" id="PS51657">
    <property type="entry name" value="PSRV_HELICASE"/>
    <property type="match status" value="1"/>
</dbReference>
<dbReference type="PROSITE" id="PS50507">
    <property type="entry name" value="RDRP_SSRNA_POS"/>
    <property type="match status" value="1"/>
</dbReference>
<organismHost>
    <name type="scientific">Sus scrofa</name>
    <name type="common">Pig</name>
    <dbReference type="NCBI Taxonomy" id="9823"/>
</organismHost>
<sequence>MSGTFSRCMCTPAARVFWNAGQVFCTRCLSARSLLSPELQDTDLGAVGLFYKPRDKLHWKVPIGIPQVECTPSGCCWLSAVFPLARMTSGNHNFLQRLVKVADVLYRDGCLAPRHLRELQVYERGCNWYPITGPVPGMGLFANSMHVSDQPFPGATHVLTNSPLPQQACRQPFCPFEEAHSSVYRWKKFVVFTDSSLNGRSRMMWTPESDDSAALEVLPPELERQVEILIRSFPAHHPVDLADWELTESPENGFSFNTSHSCGHLVQNPDVFDGKCWLSCFLGQSVEVRCHEEHLADAFGYQTKWGVHGKYLQRRLQVRGIRAVVDPDGPIHVEALSCPQSWIRHLTLDDDVTPGFVRLTSLRIVPNTEPTTSRIFRFGAHKWYGAAGKRARAKRAAKSEKDSAPTPKVALPVPTCGITTYSPPTDGSCGWHVLAAIMNRMINGDFTSPLTQYNRPEDDWASDYDLVQAIQCLRLPATVVRNRACPNAKYLIKLNGVHWEVEVRSGMAPRSLSRECVVGVCSEGCVAPPYPADGLPKRALEALASAYRLPSDCVSSGIADFLANPPPQEFWTLDKMLTSPSPERSGFSSLYKLLLEVVPQKCGATEGAFIYAVERMLKDCPSSKQAMALLAKIKVPSSKAPSVSLDECFPTDVLADFEPASQERPQSSGAAVVLCSPDAKEFEEAAPEEVQESGHKAVHSALLAEGPNNEQVQVVAGEQLKLGGCGLAVGNAHEGALVSAGLINLVGGNLSPSDPMKENMLNSREDEPLDLSQPAPASTTTLVREQTPDNPGSDAGALPVTVREFVPTGPILCHVEHCGTESGDSSSPLDLSDAQTLDQPLNLSLAAWPVRATASDPGWVHGRREPVFVKPRNAFSDGDSALQFGELSESSSVIEFDRTKDAPVVDAPVDLTTSNEALSVVDPFEFAELKRPRFSAQALIDRGGPLADVHAKIKNRVYEQCLQACEPGSRATPATREWLDKMWDRVDMKTWRCTSQFQAGRILASLKFLPDMIQDTPPPVPRKNRASDNAGLKQLVAQWDRKLSVTPPPKPVGPVLDQIVPPPTDIQQEDVTPSDGPPHAPDFPSRVSTGGSWKGLMLSGTRLAGSISQRLMTWVFEVFSHLPAFMLTLFSPRGSMAPGDWLFAGVVLLALLLCRSYPILGCLPLLGVFSGSLRRVRLGVFGSWMAFAVFLFSTPSNPVGSSCDHDSPECHAELLALEQRQLWEPVRGLVVGPSGLLCVILGKLLGGSRYLWHVLLRLCMLADLALSLVYVVSQGRCHKCWGKCIRTAPAEVALNVFPFSRATRVSLVSLCDRFQTPKGVDPVHLATGWRGCWRGESPIHQPHQKPIAYANLDEKKMSAQTVVAVPYDPSQAIKCLKVLQAGGAIVDQPTPEVVRVSEIPFSAPFFPKVPVNPDCRVVVDSDTFVAAVRCGYSTAQLVLGRGNFAKLNQTPPRNSISTKTTGGASYTLAVAQVSAWTLVHFILGLWFTSPQVCGRGTADPWCSNPFSYPTYGPGVVCSSRLCVSADGVTLPLFSAVAQLSGREVGIFILVLVSLTALAHRMALKADMLVVFSAFCAYAWPMSSWLICFFPILLKWVTLHPLTMLWVHSFLVFCLPAAGILSLGITGLLWAIGRFTQVAGIITPYDIHQYTSGPRGAAAVATAPEGTYMAAVRRAALTGRTLIFTPSAVGSLLEGAFRTHKPCLNTVNVVGSSLGSGGVFTIDGRRTVVTAAHVLNGDTARVTGDSYNRMHTFKTNGDYAWSHADDWQGVAPVVKVAKGYRGRAYWQTSTGVEPGIIGEGFAFCFTNCGDSGSPVISESGDLIGIHTGSNKLGSGLVTTPEGETCTIKETKLSDLSRHFAGPSVPLGDIKLSPAIIPDVTSIPSDLASLLASVPVVEGGLSTVQLLCVFFLLWRMMGHAWTPIVAVGFFLLNEILPAVLVRAVFSFALFVLAWATPWSAQVLMIRLLTASLNRNKLSLAFYALGGVVGLAAEIGTFAGRLSELSQALSTYCFLPRVLAMTSCVPTIIIGGLHTLGVILWLFKYRCLHNMLVGDGSFSSAFFLRYFAEGNLRKGVSQSCGMNNESLTAALACKLSQADLDFLSSLTNFKCFVSASNMKNAAGQYIEAAYAKALRQELASLVQIDKMKGVLSKLEAFAETATPSLDIGDVIVLLGQHPHGSILDINVGTERKTVSVQETRSLGGSKFSVCTVVSNTPVDALTGIPLQTPTPLFENGPRHRSEEDDLKVERMKKHCVSLGFHNINGKVYCKIWDKSTGDTFYTDDSRYTQDHAFQDRSADYRDRDYEGVQTTPQQGFDPKSETPVGTVVIGGITYNRYLIKGKEVLVPKPDNCLEAAKLSLEQALAGMGQTCDLTAAEVEKLKRIISQLQGLTTEQALNCLLAASGLTRCGRGGLVVTETAVKIIKYHSRTFTLGPLDLKVTSEVEVKKSTEQGHAVVANLCSGVILMRPHPPSLVDVLLKPGLDTIPGIQPGHGAGNMGVDGSIWDFETAPTKAELELSKQIIQACEVRRGDAPNLQLPYKLYPVRGDPERHKGRLINTRFGDLPYKTPQDTKSAIHAACCLHPNGAPVSDGKSTLGTTLQHGFELYVPTVPYSVMEYLDSRPDTPFMCTKHGTSKAAAEDLQKYDLSTQGFVLPGVLRLVRRFIFGHIGKAPPLFLPSTYPAKNSMAGINGQRFPTKDVQSIPEIDEMCARAVKENWQTVTPCTLKKQYCSKPKTRTILGTNNFIALAHRSALSGVTQAFMKKAWKSPIALGKNKFKELHCTVAGRCLEADLASCDRSTPAIVRWFVANLLYELAGCEEYLPSYVLNCCHDLVATQDGAFTKRGGLSSGDPVTSVSNTVYSLVIYAQHMVLSALKMGHEIGLKFLEEQLKFEDLLEIQPMLVYSDDLVLYAERPTFPNYHWWVEHLDLMLGFRTDPKKTVITDKPSFLGCRIEAGRQLVPNRDRILAALAYHMKAQNASEYYASAAAILMDSCACIDHDPEWYEDLICGIARCARQDGYSFPGPAFFMSMWEKLRSHNEGKKFRHCGICDAKADYASACGLDLCLFHSHFHQHCPVTLSCGHHAGSKECSQCQSPVGAGRSPLDAVLKQIPYKPPRTVIMKVGNKTTALDPGRYQSRRGLVAVKRGIAGNEVDLSDGDYQVVPLLPTCKDINMVKVACNVLLSKFIVGPPGSGKTTWLLSQVQDDDVIYTPTHQTMFDIVSALKVCRYSIPGASGLPFPPPARSGPWVRLIASGHVPGRVSYLDEAGYCNHLDILRLLSKTPLVCLGDLQQLHPVGFDSYCYVFDQMPQKQLTTIYRFGPNICAAIQPCYREKLESKARNTRVVFTTRPVAFGQVLTPYHKDRIGSAITIDSSQGATFDIVTLHLPSPKSLNKSRALVAITRARHGLFIYDPHNQLQEFFNLTPERTDCNLVFSRGDELVVLNADNAVTTVAKALETGPSRFRVSDPRCKSLLAACSASLEGSCMPLPQVAHNLGFYFSPDSPTFAPLPKELAPHWPVVTHQNNRAWPDRLVASMRPIDARYSKPMVGAGYVVGPSTFLGTPGVVSYYLTLYIRGEPQALPETLVSTGRIATDCREYLDAAEEEAAKELPHAFIGDVKGTTVGGCHHITSKYLPRSLPKDSVAVVGVSSPGRAAKAVCTLTDVYLPELRPYLQPETASKCWKLKLDFRDVRLMVWKGATAYFQLEGLTWSALPDYARFIQLPKDAVVYIDPCIGPATANRKVVRTTDWRADLAVTPYDYGAQNILTTAWFEDLGPQWKILGLQPFRRAFGFENTEDWAILARRMNDGKDYTDYNWNCVRERPHAIYGRARDHTYHFAPGTELQVELGKPRLPPGQVP</sequence>
<evidence type="ECO:0000250" key="1"/>
<evidence type="ECO:0000250" key="2">
    <source>
        <dbReference type="UniProtKB" id="A0MD28"/>
    </source>
</evidence>
<evidence type="ECO:0000250" key="3">
    <source>
        <dbReference type="UniProtKB" id="A6YQT5"/>
    </source>
</evidence>
<evidence type="ECO:0000250" key="4">
    <source>
        <dbReference type="UniProtKB" id="P0C6X7"/>
    </source>
</evidence>
<evidence type="ECO:0000250" key="5">
    <source>
        <dbReference type="UniProtKB" id="P19811"/>
    </source>
</evidence>
<evidence type="ECO:0000250" key="6">
    <source>
        <dbReference type="UniProtKB" id="Q9WJB2"/>
    </source>
</evidence>
<evidence type="ECO:0000255" key="7"/>
<evidence type="ECO:0000255" key="8">
    <source>
        <dbReference type="PROSITE-ProRule" id="PRU00539"/>
    </source>
</evidence>
<evidence type="ECO:0000255" key="9">
    <source>
        <dbReference type="PROSITE-ProRule" id="PRU00826"/>
    </source>
</evidence>
<evidence type="ECO:0000255" key="10">
    <source>
        <dbReference type="PROSITE-ProRule" id="PRU00871"/>
    </source>
</evidence>
<evidence type="ECO:0000255" key="11">
    <source>
        <dbReference type="PROSITE-ProRule" id="PRU00872"/>
    </source>
</evidence>
<evidence type="ECO:0000255" key="12">
    <source>
        <dbReference type="PROSITE-ProRule" id="PRU00873"/>
    </source>
</evidence>
<evidence type="ECO:0000255" key="13">
    <source>
        <dbReference type="PROSITE-ProRule" id="PRU00985"/>
    </source>
</evidence>
<evidence type="ECO:0000255" key="14">
    <source>
        <dbReference type="PROSITE-ProRule" id="PRU01292"/>
    </source>
</evidence>
<evidence type="ECO:0000255" key="15">
    <source>
        <dbReference type="PROSITE-ProRule" id="PRU01303"/>
    </source>
</evidence>
<evidence type="ECO:0000255" key="16">
    <source>
        <dbReference type="PROSITE-ProRule" id="PRU01306"/>
    </source>
</evidence>
<evidence type="ECO:0000256" key="17">
    <source>
        <dbReference type="SAM" id="MobiDB-lite"/>
    </source>
</evidence>
<evidence type="ECO:0000269" key="18">
    <source>
    </source>
</evidence>
<evidence type="ECO:0000269" key="19">
    <source>
    </source>
</evidence>
<evidence type="ECO:0000269" key="20">
    <source>
    </source>
</evidence>
<evidence type="ECO:0000269" key="21">
    <source>
    </source>
</evidence>
<evidence type="ECO:0000269" key="22">
    <source>
    </source>
</evidence>
<evidence type="ECO:0000269" key="23">
    <source>
    </source>
</evidence>
<evidence type="ECO:0000269" key="24">
    <source>
    </source>
</evidence>
<evidence type="ECO:0000269" key="25">
    <source>
    </source>
</evidence>
<evidence type="ECO:0000269" key="26">
    <source>
    </source>
</evidence>
<evidence type="ECO:0000269" key="27">
    <source>
    </source>
</evidence>
<evidence type="ECO:0000269" key="28">
    <source>
    </source>
</evidence>
<evidence type="ECO:0000269" key="29">
    <source>
    </source>
</evidence>
<evidence type="ECO:0000269" key="30">
    <source>
    </source>
</evidence>
<evidence type="ECO:0000269" key="31">
    <source>
    </source>
</evidence>
<evidence type="ECO:0000269" key="32">
    <source>
    </source>
</evidence>
<evidence type="ECO:0000269" key="33">
    <source>
    </source>
</evidence>
<evidence type="ECO:0000269" key="34">
    <source>
    </source>
</evidence>
<evidence type="ECO:0000269" key="35">
    <source>
    </source>
</evidence>
<evidence type="ECO:0000305" key="36"/>
<feature type="chain" id="PRO_0000036683" description="Replicase polyprotein 1ab">
    <location>
        <begin position="1"/>
        <end position="3855"/>
    </location>
</feature>
<feature type="chain" id="PRO_0000410828" description="Nsp1">
    <location>
        <begin position="1"/>
        <end position="384"/>
    </location>
</feature>
<feature type="chain" id="PRO_0000036685" description="Nsp1-alpha papain-like cysteine proteinase">
    <location>
        <begin position="1"/>
        <end position="180"/>
    </location>
</feature>
<feature type="chain" id="PRO_0000036686" description="Nsp1-beta papain-like cysteine proteinase">
    <location>
        <begin position="181"/>
        <end position="385"/>
    </location>
</feature>
<feature type="chain" id="PRO_0000036687" description="Nsp2 cysteine proteinase">
    <location>
        <begin position="386"/>
        <end position="1463"/>
    </location>
</feature>
<feature type="chain" id="PRO_0000036688" description="Non-structural protein 3">
    <location>
        <begin position="1464"/>
        <end position="1693"/>
    </location>
</feature>
<feature type="chain" id="PRO_0000036689" description="Serine protease nsp4">
    <location>
        <begin position="1694"/>
        <end position="1896"/>
    </location>
</feature>
<feature type="chain" id="PRO_0000036690" description="Non-structural protein 5-6-7">
    <location>
        <begin position="1897"/>
        <end position="2351"/>
    </location>
</feature>
<feature type="chain" id="PRO_0000423126" description="Non-structural protein 5">
    <location>
        <begin position="1897"/>
        <end position="2066"/>
    </location>
</feature>
<feature type="chain" id="PRO_0000423127" description="Non-structural protein 6">
    <location>
        <begin position="2067"/>
        <end position="2082"/>
    </location>
</feature>
<feature type="chain" id="PRO_0000423128" description="Non-structural protein 7-alpha">
    <location>
        <begin position="2083"/>
        <end position="2231"/>
    </location>
</feature>
<feature type="chain" id="PRO_0000423129" description="Non-structural protein 7-beta">
    <location>
        <begin position="2232"/>
        <end position="2351"/>
    </location>
</feature>
<feature type="chain" id="PRO_0000036691" description="RNA-directed RNA polymerase">
    <location>
        <begin position="2352"/>
        <end position="3037"/>
    </location>
</feature>
<feature type="chain" id="PRO_0000036692" description="Non-structural protein 8">
    <location>
        <begin position="2352"/>
        <end position="2396"/>
    </location>
</feature>
<feature type="chain" id="PRO_0000036693" description="Helicase nsp10">
    <location>
        <begin position="3038"/>
        <end position="3479"/>
    </location>
</feature>
<feature type="chain" id="PRO_0000036694" description="Uridylate-specific endoribonuclease nsp11">
    <location>
        <begin position="3480"/>
        <end position="3703"/>
    </location>
</feature>
<feature type="chain" id="PRO_0000036695" description="Non-structural protein 12" evidence="1">
    <location>
        <begin position="3704"/>
        <end position="3855"/>
    </location>
</feature>
<feature type="transmembrane region" description="Helical" evidence="7">
    <location>
        <begin position="1134"/>
        <end position="1154"/>
    </location>
</feature>
<feature type="transmembrane region" description="Helical" evidence="7">
    <location>
        <begin position="1179"/>
        <end position="1199"/>
    </location>
</feature>
<feature type="transmembrane region" description="Helical" evidence="7">
    <location>
        <begin position="1252"/>
        <end position="1272"/>
    </location>
</feature>
<feature type="transmembrane region" description="Helical" evidence="7">
    <location>
        <begin position="1468"/>
        <end position="1488"/>
    </location>
</feature>
<feature type="transmembrane region" description="Helical" evidence="7">
    <location>
        <begin position="1521"/>
        <end position="1541"/>
    </location>
</feature>
<feature type="transmembrane region" description="Helical" evidence="7">
    <location>
        <begin position="1543"/>
        <end position="1563"/>
    </location>
</feature>
<feature type="transmembrane region" description="Helical" evidence="7">
    <location>
        <begin position="1573"/>
        <end position="1593"/>
    </location>
</feature>
<feature type="transmembrane region" description="Helical" evidence="7">
    <location>
        <begin position="1609"/>
        <end position="1629"/>
    </location>
</feature>
<feature type="transmembrane region" description="Helical" evidence="7">
    <location>
        <begin position="1919"/>
        <end position="1939"/>
    </location>
</feature>
<feature type="transmembrane region" description="Helical" evidence="7">
    <location>
        <begin position="1943"/>
        <end position="1963"/>
    </location>
</feature>
<feature type="transmembrane region" description="Helical" evidence="7">
    <location>
        <begin position="1977"/>
        <end position="1997"/>
    </location>
</feature>
<feature type="transmembrane region" description="Helical" evidence="7">
    <location>
        <begin position="2020"/>
        <end position="2040"/>
    </location>
</feature>
<feature type="domain" description="Peptidase C31" evidence="11">
    <location>
        <begin position="69"/>
        <end position="180"/>
    </location>
</feature>
<feature type="domain" description="Peptidase C32" evidence="12">
    <location>
        <begin position="269"/>
        <end position="385"/>
    </location>
</feature>
<feature type="domain" description="Peptidase C33" evidence="10">
    <location>
        <begin position="420"/>
        <end position="527"/>
    </location>
</feature>
<feature type="domain" description="Peptidase S32" evidence="9">
    <location>
        <begin position="1694"/>
        <end position="1896"/>
    </location>
</feature>
<feature type="domain" description="NiRAN" evidence="14">
    <location>
        <begin position="2381"/>
        <end position="2544"/>
    </location>
</feature>
<feature type="domain" description="RdRp catalytic" evidence="8">
    <location>
        <begin position="2783"/>
        <end position="2917"/>
    </location>
</feature>
<feature type="domain" description="AV ZBD" evidence="13">
    <location>
        <begin position="3038"/>
        <end position="3101"/>
    </location>
</feature>
<feature type="domain" description="(+)RNA virus helicase ATP-binding">
    <location>
        <begin position="3151"/>
        <end position="3310"/>
    </location>
</feature>
<feature type="domain" description="(+)RNA virus helicase C-terminal">
    <location>
        <begin position="3311"/>
        <end position="3440"/>
    </location>
</feature>
<feature type="domain" description="AV-Nsp11N/CoV-Nsp15M" evidence="16">
    <location>
        <begin position="3479"/>
        <end position="3576"/>
    </location>
</feature>
<feature type="domain" description="NendoU" evidence="15">
    <location>
        <begin position="3578"/>
        <end position="3700"/>
    </location>
</feature>
<feature type="zinc finger region" description="C4-type; atypical">
    <location>
        <begin position="8"/>
        <end position="28"/>
    </location>
</feature>
<feature type="region of interest" description="PCP1-alpha">
    <location>
        <begin position="69"/>
        <end position="182"/>
    </location>
</feature>
<feature type="region of interest" description="Important for host EIF2AK2 inhibition" evidence="3">
    <location>
        <begin position="203"/>
        <end position="204"/>
    </location>
</feature>
<feature type="region of interest" description="PCP1-beta">
    <location>
        <begin position="269"/>
        <end position="384"/>
    </location>
</feature>
<feature type="region of interest" description="OTU-like">
    <location>
        <begin position="418"/>
        <end position="505"/>
    </location>
</feature>
<feature type="region of interest" description="Disordered" evidence="17">
    <location>
        <begin position="752"/>
        <end position="797"/>
    </location>
</feature>
<feature type="region of interest" description="Disordered" evidence="17">
    <location>
        <begin position="1047"/>
        <end position="1088"/>
    </location>
</feature>
<feature type="region of interest" description="HD1">
    <location>
        <begin position="1149"/>
        <end position="1272"/>
    </location>
</feature>
<feature type="region of interest" description="WCCH">
    <location>
        <begin position="1327"/>
        <end position="1351"/>
    </location>
</feature>
<feature type="region of interest" description="HD2">
    <location>
        <begin position="1468"/>
        <end position="1629"/>
    </location>
</feature>
<feature type="region of interest" description="HD3">
    <location>
        <begin position="1919"/>
        <end position="2040"/>
    </location>
</feature>
<feature type="compositionally biased region" description="Polar residues" evidence="17">
    <location>
        <begin position="775"/>
        <end position="790"/>
    </location>
</feature>
<feature type="active site" description="For nsp1-alpha papain-like cysteine proteinase activity" evidence="11 35">
    <location>
        <position position="76"/>
    </location>
</feature>
<feature type="active site" description="For nsp1-alpha papain-like cysteine proteinase activity" evidence="11 35">
    <location>
        <position position="146"/>
    </location>
</feature>
<feature type="active site" description="For nsp1-beta papain-like cysteine proteinase activity" evidence="12 35">
    <location>
        <position position="276"/>
    </location>
</feature>
<feature type="active site" description="For nsp1-beta papain-like cysteine proteinase activity" evidence="12 35">
    <location>
        <position position="345"/>
    </location>
</feature>
<feature type="active site" description="For nsp2 cysteine proteinase activity" evidence="10">
    <location>
        <position position="429"/>
    </location>
</feature>
<feature type="active site" description="For nsp2 cysteine proteinase activity" evidence="10">
    <location>
        <position position="498"/>
    </location>
</feature>
<feature type="active site" description="Charge relay system; for serine protease nsp4 activity" evidence="9 19 23">
    <location>
        <position position="1732"/>
    </location>
</feature>
<feature type="active site" description="Charge relay system; for serine protease nsp4 activity" evidence="9 19 23">
    <location>
        <position position="1757"/>
    </location>
</feature>
<feature type="active site" description="Charge relay system; for serine protease nsp4 activity" evidence="9 19 23">
    <location>
        <position position="1810"/>
    </location>
</feature>
<feature type="active site" evidence="15">
    <location>
        <position position="3609"/>
    </location>
</feature>
<feature type="active site" evidence="15">
    <location>
        <position position="3624"/>
    </location>
</feature>
<feature type="active site" evidence="15">
    <location>
        <position position="3653"/>
    </location>
</feature>
<feature type="binding site" evidence="13">
    <location>
        <position position="3044"/>
    </location>
    <ligand>
        <name>Zn(2+)</name>
        <dbReference type="ChEBI" id="CHEBI:29105"/>
        <label>1</label>
    </ligand>
</feature>
<feature type="binding site" evidence="13">
    <location>
        <position position="3047"/>
    </location>
    <ligand>
        <name>Zn(2+)</name>
        <dbReference type="ChEBI" id="CHEBI:29105"/>
        <label>1</label>
    </ligand>
</feature>
<feature type="binding site" evidence="13">
    <location>
        <position position="3057"/>
    </location>
    <ligand>
        <name>Zn(2+)</name>
        <dbReference type="ChEBI" id="CHEBI:29105"/>
        <label>2</label>
    </ligand>
</feature>
<feature type="binding site" evidence="13">
    <location>
        <position position="3062"/>
    </location>
    <ligand>
        <name>Zn(2+)</name>
        <dbReference type="ChEBI" id="CHEBI:29105"/>
        <label>1</label>
    </ligand>
</feature>
<feature type="binding site" evidence="13">
    <location>
        <position position="3065"/>
    </location>
    <ligand>
        <name>Zn(2+)</name>
        <dbReference type="ChEBI" id="CHEBI:29105"/>
        <label>1</label>
    </ligand>
</feature>
<feature type="binding site" evidence="13">
    <location>
        <position position="3067"/>
    </location>
    <ligand>
        <name>Zn(2+)</name>
        <dbReference type="ChEBI" id="CHEBI:29105"/>
        <label>2</label>
    </ligand>
</feature>
<feature type="binding site" evidence="13">
    <location>
        <position position="3069"/>
    </location>
    <ligand>
        <name>Zn(2+)</name>
        <dbReference type="ChEBI" id="CHEBI:29105"/>
        <label>2</label>
    </ligand>
</feature>
<feature type="binding site" evidence="13">
    <location>
        <position position="3071"/>
    </location>
    <ligand>
        <name>Zn(2+)</name>
        <dbReference type="ChEBI" id="CHEBI:29105"/>
        <label>2</label>
    </ligand>
</feature>
<feature type="binding site" evidence="13">
    <location>
        <position position="3078"/>
    </location>
    <ligand>
        <name>Zn(2+)</name>
        <dbReference type="ChEBI" id="CHEBI:29105"/>
        <label>3</label>
    </ligand>
</feature>
<feature type="binding site" evidence="13">
    <location>
        <position position="3080"/>
    </location>
    <ligand>
        <name>Zn(2+)</name>
        <dbReference type="ChEBI" id="CHEBI:29105"/>
        <label>3</label>
    </ligand>
</feature>
<feature type="binding site" evidence="13">
    <location>
        <position position="3087"/>
    </location>
    <ligand>
        <name>Zn(2+)</name>
        <dbReference type="ChEBI" id="CHEBI:29105"/>
        <label>3</label>
    </ligand>
</feature>
<feature type="binding site" evidence="13">
    <location>
        <position position="3090"/>
    </location>
    <ligand>
        <name>Zn(2+)</name>
        <dbReference type="ChEBI" id="CHEBI:29105"/>
        <label>3</label>
    </ligand>
</feature>
<feature type="binding site" evidence="1">
    <location>
        <begin position="3186"/>
        <end position="3193"/>
    </location>
    <ligand>
        <name>ATP</name>
        <dbReference type="ChEBI" id="CHEBI:30616"/>
    </ligand>
</feature>
<feature type="site" description="Cleavage; by autolysis" evidence="6">
    <location>
        <begin position="180"/>
        <end position="181"/>
    </location>
</feature>
<feature type="site" description="Cleavage; by autolysis" evidence="6">
    <location>
        <begin position="385"/>
        <end position="386"/>
    </location>
</feature>
<feature type="site" description="Cleavage; by CP2" evidence="2">
    <location>
        <begin position="1463"/>
        <end position="1464"/>
    </location>
</feature>
<feature type="site" description="Cleavage; by 3CLSP" evidence="2">
    <location>
        <begin position="1693"/>
        <end position="1694"/>
    </location>
</feature>
<feature type="site" description="Cleavage; by 3CLSP" evidence="2">
    <location>
        <begin position="1896"/>
        <end position="1897"/>
    </location>
</feature>
<feature type="site" description="Cleavage; by 3CLSP" evidence="2">
    <location>
        <begin position="2066"/>
        <end position="2067"/>
    </location>
</feature>
<feature type="site" description="Cleavage; by 3CLSP" evidence="2">
    <location>
        <begin position="2082"/>
        <end position="2083"/>
    </location>
</feature>
<feature type="site" description="Cleavage; by 3CLSP" evidence="2">
    <location>
        <begin position="2231"/>
        <end position="2232"/>
    </location>
</feature>
<feature type="site" description="Cleavage; by 3CLSP" evidence="2">
    <location>
        <begin position="2351"/>
        <end position="2352"/>
    </location>
</feature>
<feature type="site" description="Cleavage; by 3CLSP" evidence="2">
    <location>
        <begin position="2396"/>
        <end position="2397"/>
    </location>
</feature>
<feature type="site" description="Cleavage; by 3CLSP" evidence="2">
    <location>
        <begin position="3037"/>
        <end position="3038"/>
    </location>
</feature>
<feature type="site" description="Involved in mRNA transcription process" evidence="1">
    <location>
        <position position="3088"/>
    </location>
</feature>
<feature type="site" description="Cleavage; by 3CLSP" evidence="1">
    <location>
        <begin position="3479"/>
        <end position="3480"/>
    </location>
</feature>
<feature type="site" description="Cleavage; by 3CLSP" evidence="1">
    <location>
        <begin position="3703"/>
        <end position="3704"/>
    </location>
</feature>
<feature type="splice variant" id="VSP_032892" description="In isoform Replicase polyprotein 1a." evidence="36">
    <location>
        <begin position="2397"/>
        <end position="3855"/>
    </location>
</feature>
<feature type="mutagenesis site" description="Complete loss of cleavage between nsp1-alpha and nsp1-beta." evidence="35">
    <original>C</original>
    <variation>G</variation>
    <variation>S</variation>
    <location>
        <position position="76"/>
    </location>
</feature>
<feature type="mutagenesis site" description="No effect." evidence="35">
    <original>H</original>
    <variation>F</variation>
    <variation>Y</variation>
    <location>
        <position position="92"/>
    </location>
</feature>
<feature type="mutagenesis site" description="No effect." evidence="35">
    <original>H</original>
    <variation>A</variation>
    <location>
        <position position="115"/>
    </location>
</feature>
<feature type="mutagenesis site" description="50% loss of cleavage between nsp1-alpha and nsp1-beta." evidence="35">
    <original>H</original>
    <variation>Y</variation>
    <location>
        <position position="115"/>
    </location>
</feature>
<feature type="mutagenesis site" description="Complete loss of cleavage between nsp1-alpha and nsp1-beta." evidence="35">
    <original>H</original>
    <variation>D</variation>
    <variation>F</variation>
    <variation>I</variation>
    <variation>N</variation>
    <variation>Y</variation>
    <location>
        <position position="146"/>
    </location>
</feature>
<feature type="mutagenesis site" description="20% loss of cleavage between nsp1-alpha and nsp1-beta." evidence="35">
    <original>H</original>
    <variation>D</variation>
    <location>
        <position position="157"/>
    </location>
</feature>
<feature type="mutagenesis site" description="90% loss of cleavage between nsp1-alpha and nsp1-beta." evidence="35">
    <original>H</original>
    <variation>I</variation>
    <location>
        <position position="157"/>
    </location>
</feature>
<feature type="mutagenesis site" description="50% loss of cleavage between nsp1-alpha and nsp1-beta." evidence="35">
    <original>H</original>
    <variation>N</variation>
    <location>
        <position position="157"/>
    </location>
</feature>
<feature type="mutagenesis site" description="No effect." evidence="35">
    <original>H</original>
    <variation>Y</variation>
    <location>
        <position position="157"/>
    </location>
</feature>
<feature type="mutagenesis site" description="Complete loss of cleavage between nsp1-beta and nsp2." evidence="35">
    <original>C</original>
    <variation>I</variation>
    <variation>L</variation>
    <variation>R</variation>
    <variation>S</variation>
    <location>
        <position position="276"/>
    </location>
</feature>
<feature type="mutagenesis site" description="Complete loss of cleavage between nsp1-beta and nsp2." evidence="35">
    <original>H</original>
    <variation>D</variation>
    <variation>Y</variation>
    <location>
        <position position="345"/>
    </location>
</feature>
<feature type="mutagenesis site" description="Complete loss of cleavage activity; when associated with A-1757 and A-1810." evidence="23">
    <original>H</original>
    <variation>A</variation>
    <location>
        <position position="1732"/>
    </location>
</feature>
<feature type="mutagenesis site" description="Complete loss of host DCP1A cleavage." evidence="34">
    <original>H</original>
    <variation>A</variation>
    <location>
        <position position="1732"/>
    </location>
</feature>
<feature type="mutagenesis site" description="Complete loss of cleavage activity; when associated with A-1732 and A-1810." evidence="23">
    <original>D</original>
    <variation>A</variation>
    <location>
        <position position="1757"/>
    </location>
</feature>
<feature type="mutagenesis site" description="Complete loss of host DCP1A cleavage." evidence="34">
    <original>D</original>
    <variation>A</variation>
    <location>
        <position position="1757"/>
    </location>
</feature>
<feature type="mutagenesis site" description="Complete loss of cleavage activity; when associated with A-1732 and A-1757." evidence="23">
    <original>S</original>
    <variation>A</variation>
    <location>
        <position position="1810"/>
    </location>
</feature>
<feature type="mutagenesis site" description="Complete loss of host DCP1A cleavage." evidence="34">
    <original>S</original>
    <variation>A</variation>
    <location>
        <position position="1810"/>
    </location>
</feature>
<feature type="sequence conflict" description="In Ref. 3; AAA47101." evidence="36" ref="3">
    <original>T</original>
    <variation>V</variation>
    <location>
        <position position="3502"/>
    </location>
</feature>
<feature type="sequence conflict" description="In Ref. 3; AAA47101." evidence="36" ref="3">
    <original>V</original>
    <variation>I</variation>
    <location>
        <position position="3740"/>
    </location>
</feature>
<organism>
    <name type="scientific">Porcine reproductive and respiratory syndrome virus (strain Lelystad)</name>
    <name type="common">PRRSV</name>
    <dbReference type="NCBI Taxonomy" id="11049"/>
    <lineage>
        <taxon>Viruses</taxon>
        <taxon>Riboviria</taxon>
        <taxon>Orthornavirae</taxon>
        <taxon>Pisuviricota</taxon>
        <taxon>Pisoniviricetes</taxon>
        <taxon>Nidovirales</taxon>
        <taxon>Arnidovirineae</taxon>
        <taxon>Arteriviridae</taxon>
        <taxon>Variarterivirinae</taxon>
        <taxon>Betaarterivirus</taxon>
        <taxon>Eurpobartevirus</taxon>
        <taxon>Betaarterivirus suid 1</taxon>
    </lineage>
</organism>
<proteinExistence type="evidence at protein level"/>
<keyword id="KW-1072">Activation of host autophagy by virus</keyword>
<keyword id="KW-0067">ATP-binding</keyword>
<keyword id="KW-0255">Endonuclease</keyword>
<keyword id="KW-0347">Helicase</keyword>
<keyword id="KW-1035">Host cytoplasm</keyword>
<keyword id="KW-1038">Host endoplasmic reticulum</keyword>
<keyword id="KW-1043">Host membrane</keyword>
<keyword id="KW-1048">Host nucleus</keyword>
<keyword id="KW-0945">Host-virus interaction</keyword>
<keyword id="KW-0378">Hydrolase</keyword>
<keyword id="KW-1090">Inhibition of host innate immune response by virus</keyword>
<keyword id="KW-1114">Inhibition of host interferon signaling pathway by virus</keyword>
<keyword id="KW-1095">Inhibition of host ISG15 by virus</keyword>
<keyword id="KW-1100">Inhibition of host NF-kappa-B by virus</keyword>
<keyword id="KW-1102">Inhibition of host PKR by virus</keyword>
<keyword id="KW-1105">Inhibition of host STAT1 by virus</keyword>
<keyword id="KW-0922">Interferon antiviral system evasion</keyword>
<keyword id="KW-0456">Lyase</keyword>
<keyword id="KW-0472">Membrane</keyword>
<keyword id="KW-0479">Metal-binding</keyword>
<keyword id="KW-1127">Modulation of host ubiquitin pathway by viral deubiquitinase</keyword>
<keyword id="KW-1130">Modulation of host ubiquitin pathway by virus</keyword>
<keyword id="KW-0511">Multifunctional enzyme</keyword>
<keyword id="KW-0540">Nuclease</keyword>
<keyword id="KW-0547">Nucleotide-binding</keyword>
<keyword id="KW-0548">Nucleotidyltransferase</keyword>
<keyword id="KW-0645">Protease</keyword>
<keyword id="KW-1185">Reference proteome</keyword>
<keyword id="KW-0688">Ribosomal frameshifting</keyword>
<keyword id="KW-0696">RNA-directed RNA polymerase</keyword>
<keyword id="KW-0720">Serine protease</keyword>
<keyword id="KW-0788">Thiol protease</keyword>
<keyword id="KW-0808">Transferase</keyword>
<keyword id="KW-0812">Transmembrane</keyword>
<keyword id="KW-1133">Transmembrane helix</keyword>
<keyword id="KW-0899">Viral immunoevasion</keyword>
<keyword id="KW-0693">Viral RNA replication</keyword>
<keyword id="KW-0862">Zinc</keyword>
<keyword id="KW-0863">Zinc-finger</keyword>
<reference key="1">
    <citation type="journal article" date="1993" name="Virology">
        <title>Lelystad virus, the causative agent of porcine epidemic abortion and respiratory syndrome (PEARS), is related to LDV and EAV.</title>
        <authorList>
            <person name="Meulenberg J.J.M."/>
            <person name="Hulst M.M."/>
            <person name="de Meijer E.J."/>
            <person name="Moonen P.L.J.M."/>
            <person name="den Besten A."/>
            <person name="de Kluyver E.P."/>
            <person name="Wensvoort G."/>
            <person name="Moormann R.J.M."/>
        </authorList>
    </citation>
    <scope>NUCLEOTIDE SEQUENCE [GENOMIC RNA]</scope>
</reference>
<reference key="2">
    <citation type="submission" date="2000-11" db="EMBL/GenBank/DDBJ databases">
        <authorList>
            <person name="Kroese M.V."/>
            <person name="Moormann R.J.M."/>
        </authorList>
    </citation>
    <scope>SEQUENCE REVISION TO 3327</scope>
</reference>
<reference key="3">
    <citation type="journal article" date="1993" name="Virology">
        <title>Molecular characterization of porcine reproductive and respiratory syndrome virus, a member of the arterivirus group.</title>
        <authorList>
            <person name="Conzelmann K.K."/>
            <person name="Visser N."/>
            <person name="van Woensel P."/>
            <person name="Thiel H.J."/>
        </authorList>
    </citation>
    <scope>NUCLEOTIDE SEQUENCE [GENOMIC RNA] OF 3323-3855</scope>
    <source>
        <strain>Isolate Boxmeer 10</strain>
    </source>
</reference>
<reference key="4">
    <citation type="journal article" date="1995" name="J. Virol.">
        <title>Processing and evolution of the N-terminal region of the arterivirus replicase ORF1a protein: identification of two papainlike cysteine proteases.</title>
        <authorList>
            <person name="den Boon J.A."/>
            <person name="Faaberg K.S."/>
            <person name="Meulenberg J.J.M."/>
            <person name="Wassenaar A.L.M."/>
            <person name="Plagemann P.G.W."/>
            <person name="Gorbalenya A.E."/>
            <person name="Snijder E.J."/>
        </authorList>
    </citation>
    <scope>ACTIVE SITES OF PCP1-ALPHA AND PCP1-BETA</scope>
    <scope>MUTAGENESIS OF CYS-76; HIS-92; HIS-115; HIS-146; HIS-157; HIS-157; CYS-276 AND HIS-345</scope>
</reference>
<reference key="5">
    <citation type="journal article" date="2002" name="Virology">
        <title>Functional properties of the predicted helicase of porcine reproductive and respiratory syndrome virus.</title>
        <authorList>
            <person name="Bautista E.M."/>
            <person name="Faaberg K.S."/>
            <person name="Mickelson D."/>
            <person name="McGruder E.D."/>
        </authorList>
    </citation>
    <scope>FUNCTION (HELICASE)</scope>
</reference>
<reference key="6">
    <citation type="journal article" date="2009" name="J. Mol. Biol.">
        <title>Structure and cleavage specificity of the chymotrypsin-like serine protease (3CLSP/nsp4) of Porcine Reproductive and Respiratory Syndrome Virus (PRRSV).</title>
        <authorList>
            <person name="Tian X."/>
            <person name="Lu G."/>
            <person name="Gao F."/>
            <person name="Peng H."/>
            <person name="Feng Y."/>
            <person name="Ma G."/>
            <person name="Bartlam M."/>
            <person name="Tian K."/>
            <person name="Yan J."/>
            <person name="Hilgenfeld R."/>
            <person name="Gao G.F."/>
        </authorList>
    </citation>
    <scope>FUNCTION (SERINE PROTEASE NSP4)</scope>
    <scope>ACTIVE SITE (SERINE PROTEASE NSP4)</scope>
    <source>
        <strain>JXA1</strain>
    </source>
</reference>
<reference key="7">
    <citation type="journal article" date="2011" name="Autophagy">
        <title>Coronavirus nsp6 proteins generate autophagosomes from the endoplasmic reticulum via an omegasome intermediate.</title>
        <authorList>
            <person name="Cottam E.M."/>
            <person name="Maier H.J."/>
            <person name="Manifava M."/>
            <person name="Vaux L.C."/>
            <person name="Chandra-Schoenfelder P."/>
            <person name="Gerner W."/>
            <person name="Britton P."/>
            <person name="Ktistakis N.T."/>
            <person name="Wileman T."/>
        </authorList>
    </citation>
    <scope>FUNCTION (NON-STRUCTURAL PROTEIN 5-6-7)</scope>
    <scope>SUBCELLULAR LOCATION (NON-STRUCTURAL PROTEIN 5-6-7)</scope>
</reference>
<reference key="8">
    <citation type="journal article" date="2013" name="Virus Res.">
        <title>Degradation of CREB-binding protein and modulation of type I interferon induction by the zinc finger motif of the porcine reproductive and respiratory syndrome virus nsp1alpha subunit.</title>
        <authorList>
            <person name="Han M."/>
            <person name="Du Y."/>
            <person name="Song C."/>
            <person name="Yoo D."/>
        </authorList>
    </citation>
    <scope>FUNCTION (NSP1-ALPHA PAPAIN-LIKE CYSTEINE PROTEINASE)</scope>
    <scope>SUBCELLULAR LOCATION (NSP1-ALPHA PAPAIN-LIKE CYSTEINE PROTEINASE)</scope>
    <source>
        <strain>PA8</strain>
    </source>
</reference>
<reference key="9">
    <citation type="journal article" date="2013" name="PLoS ONE">
        <title>Porcine reproductive and respiratory syndrome virus nonstructural protein 4 induces apoptosis dependent on its 3C-like serine protease activity.</title>
        <authorList>
            <person name="Ma Z."/>
            <person name="Wang Y."/>
            <person name="Zhao H."/>
            <person name="Xu A.T."/>
            <person name="Wang Y."/>
            <person name="Tang J."/>
            <person name="Feng W.H."/>
        </authorList>
    </citation>
    <scope>FUNCTION (SERINE PROTEASE NSP4)</scope>
    <source>
        <strain>CH-1a</strain>
    </source>
</reference>
<reference key="10">
    <citation type="journal article" date="2014" name="Virus Res.">
        <title>Porcine reproductive and respiratory syndrome virus counteracts the porcine intrinsic virus restriction factors-IFITM1 and Tetherin in MARC-145 cells.</title>
        <authorList>
            <person name="Wang X."/>
            <person name="Li C."/>
            <person name="Zhou L."/>
            <person name="Zhang N."/>
            <person name="Wang X."/>
            <person name="Ge X."/>
            <person name="Guo X."/>
            <person name="Yang H."/>
        </authorList>
    </citation>
    <scope>FUNCTION (NON-STRUCTURAL PROTEIN 3)</scope>
    <scope>SUBCELLULAR LOCATION (NON-STRUCTURAL PROTEIN 3)</scope>
    <scope>INTERACTION WITH HOST IFITM1 (NON-STRUCTURAL PROTEIN 3)</scope>
    <source>
        <strain>JXwn06</strain>
    </source>
</reference>
<reference key="11">
    <citation type="journal article" date="2014" name="J. Virol.">
        <title>Porcine reproductive and respiratory syndrome virus nonstructural protein 4 antagonizes beta interferon expression by targeting the NF-kappaB essential modulator.</title>
        <authorList>
            <person name="Huang C."/>
            <person name="Zhang Q."/>
            <person name="Guo X.K."/>
            <person name="Yu Z.B."/>
            <person name="Xu A.T."/>
            <person name="Tang J."/>
            <person name="Feng W.H."/>
        </authorList>
    </citation>
    <scope>FUNCTION (SERINE PROTEASE NSP4)</scope>
    <scope>ACTIVE SITE (SERINE PROTEASE NSP4)</scope>
    <scope>MUTAGENESIS OF HIS-1732; ASP-1757 AND SER-1810</scope>
</reference>
<reference key="12">
    <citation type="journal article" date="2015" name="Virus Res.">
        <title>The DEAD-box RNA helicase 5 positively regulates the replication of porcine reproductive and respiratory syndrome virus by interacting with viral Nsp9 in vitro.</title>
        <authorList>
            <person name="Zhao S."/>
            <person name="Ge X."/>
            <person name="Wang X."/>
            <person name="Liu A."/>
            <person name="Guo X."/>
            <person name="Zhou L."/>
            <person name="Yu K."/>
            <person name="Yang H."/>
        </authorList>
    </citation>
    <scope>FUNCTION (RNA-DIRECTED RNA POLYMERASE)</scope>
    <scope>INTERACTION WITH HOST DDX5 (RNA-DIRECTED RNA POLYMERASE)</scope>
    <scope>SUBCELLULAR LOCATION (RNA-DIRECTED RNA POLYMERASE)</scope>
    <source>
        <strain>JXwn06</strain>
    </source>
</reference>
<reference key="13">
    <citation type="journal article" date="2015" name="DNA Cell Biol.">
        <title>The endoribonuclease activity essential for the nonstructural protein 11 of porcine reproductive and respiratory syndrome virus to inhibit NLRP3 inflammasome-Mediated IL-1beta induction.</title>
        <authorList>
            <person name="Wang C."/>
            <person name="Shi X."/>
            <person name="Zhang X."/>
            <person name="Wang A."/>
            <person name="Wang L."/>
            <person name="Chen J."/>
            <person name="Deng R."/>
            <person name="Zhang G."/>
        </authorList>
    </citation>
    <scope>FUNCTION (URIDYLATE-SPECIFIC ENDORIBONUCLEASE NSP11)</scope>
    <source>
        <strain>BJ-4</strain>
    </source>
</reference>
<reference key="14">
    <citation type="journal article" date="2016" name="Sci. Rep.">
        <title>Highly Pathogenic Porcine Reproductive and Respiratory Syndrome Virus Nsp4 Cleaves VISA to Impair Antiviral Responses Mediated by RIG-I-like Receptors.</title>
        <authorList>
            <person name="Huang C."/>
            <person name="Du Y."/>
            <person name="Yu Z."/>
            <person name="Zhang Q."/>
            <person name="Liu Y."/>
            <person name="Tang J."/>
            <person name="Shi J."/>
            <person name="Feng W.H."/>
        </authorList>
    </citation>
    <scope>FUNCTION (SERINE PROTEASE NSP4)</scope>
</reference>
<reference key="15">
    <citation type="journal article" date="2017" name="Virology">
        <title>Nuclear imprisonment of host cellular mRNA by nsp1beta protein of porcine reproductive and respiratory syndrome virus.</title>
        <authorList>
            <person name="Han M."/>
            <person name="Ke H."/>
            <person name="Zhang Q."/>
            <person name="Yoo D."/>
        </authorList>
    </citation>
    <scope>FUNCTION (NSP1-BETA PAPAIN-LIKE CYSTEINE PROTEINASE)</scope>
    <scope>SUBCELLULAR LOCATION (NSP1-ALPHA PAPAIN-LIKE CYSTEINE PROTEINASE)</scope>
    <scope>SUBCELLULAR LOCATION (NSP1-BETA PAPAIN-LIKE CYSTEINE PROTEINASE)</scope>
</reference>
<reference key="16">
    <citation type="journal article" date="2017" name="J. Virol.">
        <title>Porcine Reproductive and Respiratory Syndrome Virus nsp1alpha Inhibits NF-kappaB Activation by Targeting the Linear Ubiquitin Chain Assembly Complex.</title>
        <authorList>
            <person name="Jing H."/>
            <person name="Fang L."/>
            <person name="Ding Z."/>
            <person name="Wang D."/>
            <person name="Hao W."/>
            <person name="Gao L."/>
            <person name="Ke W."/>
            <person name="Chen H."/>
            <person name="Xiao S."/>
        </authorList>
    </citation>
    <scope>FUNCTION (NSP1-ALPHA PAPAIN-LIKE CYSTEINE PROTEINASE)</scope>
    <scope>INTERACTION WITH HOST RNF31 (NSP1-ALPHA PAPAIN-LIKE CYSTEINE PROTEINASE)</scope>
</reference>
<reference key="17">
    <citation type="journal article" date="2017" name="J. Virol.">
        <title>Porcine Reproductive and Respiratory Syndrome Virus Antagonizes JAK/STAT3 Signaling via nsp5, Which Induces STAT3 Degradation.</title>
        <authorList>
            <person name="Yang L."/>
            <person name="Wang R."/>
            <person name="Ma Z."/>
            <person name="Xiao Y."/>
            <person name="Nan Y."/>
            <person name="Wang Y."/>
            <person name="Lin S."/>
            <person name="Zhang Y.J."/>
        </authorList>
    </citation>
    <scope>FUNCTION (NON-STRUCTURAL PROTEIN 5)</scope>
</reference>
<reference key="18">
    <citation type="journal article" date="2017" name="Virus Res.">
        <title>Cellular DEAD-box RNA helicase 18 (DDX18) Promotes the PRRSV Replication via Interaction with Virus nsp2 and nsp10.</title>
        <authorList>
            <person name="Jin H."/>
            <person name="Zhou L."/>
            <person name="Ge X."/>
            <person name="Zhang H."/>
            <person name="Zhang R."/>
            <person name="Wang C."/>
            <person name="Wang L."/>
            <person name="Zhang Z."/>
            <person name="Yang H."/>
            <person name="Guo X."/>
        </authorList>
    </citation>
    <scope>INTERACTION WITH HOST DDX18 (NSP2 CYSTEINE PROTEINASE)</scope>
    <scope>INTERACTION WITH HOST DDX18 (HELICASE NSP10)</scope>
    <scope>SUBCELLULAR LOCATION (NSP2 CYSTEINE PROTEINASE)</scope>
    <scope>SUBCELLULAR LOCATION (HELICASE NSP10)</scope>
</reference>
<reference key="19">
    <citation type="journal article" date="2018" name="J. Virol.">
        <title>The Superimposed Deubiquitination Effect of OTULIN and Porcine Reproductive and Respiratory Syndrome Virus (PRRSV) Nsp11 Promotes Multiplication of PRRSV.</title>
        <authorList>
            <person name="Su Y."/>
            <person name="Shi P."/>
            <person name="Zhang L."/>
            <person name="Lu D."/>
            <person name="Zhao C."/>
            <person name="Li R."/>
            <person name="Zhang L."/>
            <person name="Huang J."/>
        </authorList>
    </citation>
    <scope>FUNCTION (URIDYLATE-SPECIFIC ENDORIBONUCLEASE NSP11)</scope>
    <scope>SUBCELLULAR LOCATION (URIDYLATE-SPECIFIC ENDORIBONUCLEASE NSP11)</scope>
    <scope>INTERACTION WITH HOST OTULIN (URIDYLATE-SPECIFIC ENDORIBONUCLEASE NSP11)</scope>
</reference>
<reference key="20">
    <citation type="journal article" date="2018" name="J. Immunol.">
        <title>Porcine Reproductive and Respiratory Syndrome Virus Nonstructural Protein 4 Cleaves Porcine DCP1a To Attenuate Its Antiviral Activity.</title>
        <authorList>
            <person name="Tao R."/>
            <person name="Fang L."/>
            <person name="Bai D."/>
            <person name="Ke W."/>
            <person name="Zhou Y."/>
            <person name="Wang D."/>
            <person name="Xiao S."/>
        </authorList>
    </citation>
    <scope>FUNCTION (SERINE PROTEASE NSP4)</scope>
    <scope>MUTAGENESIS OF HIS-1732; ASP-1757 AND SER-1810</scope>
</reference>
<reference key="21">
    <citation type="journal article" date="2018" name="Virus Res.">
        <title>Galectin-3 inhibits replication of porcine reproductive and respiratory syndrome virus by interacting with viral Nsp12 in vitro.</title>
        <authorList>
            <person name="Li L."/>
            <person name="Zhou Y."/>
            <person name="Jiang Y."/>
            <person name="Gao F."/>
            <person name="Shan T."/>
            <person name="Zhao K."/>
            <person name="Zhang Y."/>
            <person name="Li L."/>
            <person name="Tong G."/>
        </authorList>
    </citation>
    <scope>INTERACTION WITH HOST LGALS3 (NON-STRUCTURAL PROTEIN 12)</scope>
    <scope>SUBCELLULAR LOCATION (NON-STRUCTURAL PROTEIN 12)</scope>
</reference>
<comment type="function">
    <molecule>Replicase polyprotein 1ab</molecule>
    <text>Contains the activities necessary for the transcription of negative stranded RNA, leader RNA, subgenomic mRNAs and progeny virion RNA as well as proteinases responsible for the cleavage of the polyprotein into functional products.</text>
</comment>
<comment type="function">
    <molecule>Nsp1-alpha papain-like cysteine proteinase</molecule>
    <text evidence="6 21 28">Inhibits host IFN-beta production. Plays a role in the degradation of the host transcriptional activator CREBBP protein (PubMed:23287061). The degradation of host CREBBP which is a key component of the IFN enhanceosome is likely responsible for the inhibition of interferon mediated by Nsp1-alpha (PubMed:23287061). Also participates in the inhibition of host NF-kappa-B activation by counteracting LUBAC-dependent induction of NF-kappa-B (PubMed:27881655). Reduces host NEMO ubiquitination by blocking the interaction between the two LUBAC complex components RNF31 and SHARPIN (PubMed:27881655).</text>
</comment>
<comment type="function">
    <molecule>Nsp1-beta papain-like cysteine proteinase</molecule>
    <text evidence="3 6 30">Plays a role in blocking host mRNA nuclear export to the cytoplasm and subversion of host protein synthesis (PubMed:28235682). Additionally, inhibits the interferon-activated JAK/STAT signal transduction by mediating the ubiquitination and subsequent proteasomal degradation of host KPNA1 (By similarity). Repurposes the host antiviral stress granules into a proviral platform to counteract the EIF2AK2/PKR restriction, thereby regulating the host inflammatory response (By similarity).</text>
</comment>
<comment type="function">
    <molecule>Nsp2 cysteine proteinase</molecule>
    <text evidence="2">Multifunctional protein that acts as a viral protease and as a viral antagonist of host immune response. Cleaves the nsp2/nsp3 site in the viral polyprotein. Displays deubiquitinating activity that cleaves both ubiquitinated and ISGylated products and therefore inhibits ubiquitin and ISG15-dependent host innate immunity. Also deubiquinates host NFKBIA, thereby interfering with NFKBIA degradation and impairing subsequent NF-kappa-B activation.</text>
</comment>
<comment type="function">
    <molecule>Non-structural protein 3</molecule>
    <text evidence="24">Plays a role in the inhibition of the immune response by interacting with host IFITM1 (PubMed:25102331). This interaction leads to the proteasomal degradation of the IFN-induced antiviral protein IFITM1 (PubMed:25102331).</text>
</comment>
<comment type="function">
    <molecule>Serine protease nsp4</molecule>
    <text evidence="19 22 23 27 34">Cleaves the majority of cleavage sites present in the C-terminus of the polyprotein (PubMed:19646449). Triggers host apoptosis through caspase-3, -8, and -9 activations. Subverts host innate immune responses through its protease activity. Targets the NF-kappa-B essential modulator NEMO and mediates its cleavage (PubMed:25008936). Blocks host interferon beta induction and downstream signaling by cleaving mitochondrial MAVS, dislodging it from the mitochondria (PubMed:27329948). Impairs host defense by cleaving host mRNA-decapping enzyme DCP1A to attenuate its antiviral activity (PubMed:30158128).</text>
</comment>
<comment type="function">
    <molecule>Non-structural protein 5-6-7</molecule>
    <text evidence="20">Plays a role in the initial induction of autophagosomes from host endoplasmic reticulum.</text>
</comment>
<comment type="function">
    <molecule>Non-structural protein 5</molecule>
    <text evidence="29">Plays a role in the inhibition of host STAT3 signaling pathway by inducing the degradation of STAT3.</text>
</comment>
<comment type="function">
    <molecule>RNA-directed RNA polymerase</molecule>
    <text evidence="25">Responsible for replication and transcription of the viral RNA genome.</text>
</comment>
<comment type="function">
    <molecule>Helicase nsp10</molecule>
    <text evidence="18">Displays RNA and DNA duplex-unwinding activities with 5' to 3' polarity.</text>
</comment>
<comment type="function">
    <molecule>Uridylate-specific endoribonuclease nsp11</molecule>
    <text evidence="4 5 26 32">Plays a role in viral transcription/replication and prevents the simultaneous activation of host cell dsRNA sensors, such as MDA5/IFIH1, OAS, PKR (By similarity) and NLRP3 inflammasome (PubMed:26398903). Acts by degrading the 5'-polyuridines generated during replication of the poly(A) region of viral genomic and subgenomic RNAs. Catalyzes a two-step reaction in which a 2'3'-cyclic phosphate (2'3'-cP) is first generated by 2'-O transesterification, which is then hydrolyzed to a 3'-phosphate (3'-P) (By similarity). If not degraded, poly(U) RNA would hybridize with poly(A) RNA tails and activate host dsRNA sensors (By similarity). Also plays a role in the inhibition of host type I interferon production by recruiting host OTULIN to promote removal of linear ubiquitination targeting host NEMO (PubMed:29444948).</text>
</comment>
<comment type="catalytic activity">
    <molecule>RNA-directed RNA polymerase</molecule>
    <reaction evidence="8">
        <text>RNA(n) + a ribonucleoside 5'-triphosphate = RNA(n+1) + diphosphate</text>
        <dbReference type="Rhea" id="RHEA:21248"/>
        <dbReference type="Rhea" id="RHEA-COMP:14527"/>
        <dbReference type="Rhea" id="RHEA-COMP:17342"/>
        <dbReference type="ChEBI" id="CHEBI:33019"/>
        <dbReference type="ChEBI" id="CHEBI:61557"/>
        <dbReference type="ChEBI" id="CHEBI:140395"/>
        <dbReference type="EC" id="2.7.7.48"/>
    </reaction>
</comment>
<comment type="catalytic activity">
    <molecule>Helicase nsp10</molecule>
    <reaction>
        <text>ATP + H2O = ADP + phosphate + H(+)</text>
        <dbReference type="Rhea" id="RHEA:13065"/>
        <dbReference type="ChEBI" id="CHEBI:15377"/>
        <dbReference type="ChEBI" id="CHEBI:15378"/>
        <dbReference type="ChEBI" id="CHEBI:30616"/>
        <dbReference type="ChEBI" id="CHEBI:43474"/>
        <dbReference type="ChEBI" id="CHEBI:456216"/>
        <dbReference type="EC" id="3.6.4.12"/>
    </reaction>
</comment>
<comment type="catalytic activity">
    <molecule>Helicase nsp10</molecule>
    <reaction>
        <text>ATP + H2O = ADP + phosphate + H(+)</text>
        <dbReference type="Rhea" id="RHEA:13065"/>
        <dbReference type="ChEBI" id="CHEBI:15377"/>
        <dbReference type="ChEBI" id="CHEBI:15378"/>
        <dbReference type="ChEBI" id="CHEBI:30616"/>
        <dbReference type="ChEBI" id="CHEBI:43474"/>
        <dbReference type="ChEBI" id="CHEBI:456216"/>
        <dbReference type="EC" id="3.6.4.13"/>
    </reaction>
</comment>
<comment type="catalytic activity">
    <molecule>Nsp2 cysteine proteinase</molecule>
    <reaction>
        <text>Thiol-dependent hydrolysis of ester, thioester, amide, peptide and isopeptide bonds formed by the C-terminal Gly of ubiquitin (a 76-residue protein attached to proteins as an intracellular targeting signal).</text>
        <dbReference type="EC" id="3.4.19.12"/>
    </reaction>
</comment>
<comment type="catalytic activity">
    <molecule>Uridylate-specific endoribonuclease nsp11</molecule>
    <reaction evidence="5">
        <text>uridylyl-uridylyl-ribonucleotide-RNA = a 3'-end uridylyl-2',3'-cyclophospho-uridine-RNA + a 5'-end dephospho-ribonucleoside-RNA</text>
        <dbReference type="Rhea" id="RHEA:67732"/>
        <dbReference type="Rhea" id="RHEA-COMP:13936"/>
        <dbReference type="Rhea" id="RHEA-COMP:17334"/>
        <dbReference type="Rhea" id="RHEA-COMP:17335"/>
        <dbReference type="ChEBI" id="CHEBI:138284"/>
        <dbReference type="ChEBI" id="CHEBI:173079"/>
        <dbReference type="ChEBI" id="CHEBI:173080"/>
    </reaction>
</comment>
<comment type="subunit">
    <text evidence="28">Nsp1-alpha papain-like: Interacts with host RNF31 (PubMed:27881655).</text>
</comment>
<comment type="subunit">
    <molecule>Nsp1-beta papain-like cysteine proteinase</molecule>
    <text evidence="3">Interacts with host EIF2AK2; this interaction occurs in host stress granules and leads to EIF2AK2 inhibition (By similarity). Interacts with host G3BP1; this interaction probably plays a role in Nsp1-beta-mediated inhibition of host EIF2AK2 (By similarity).</text>
</comment>
<comment type="subunit">
    <molecule>Nsp2 cysteine proteinase</molecule>
    <text evidence="31">Interacts with host DDX18; this interaction redistributes host DDX18 to the cytoplasm (PubMed:28648849).</text>
</comment>
<comment type="subunit">
    <molecule>Non-structural protein 3</molecule>
    <text evidence="24">Interacts with host IFITM1 (PubMed:25102331).</text>
</comment>
<comment type="subunit">
    <molecule>RNA-directed RNA polymerase</molecule>
    <text evidence="25">Interacts with host DDX5 (PubMed:25449571).</text>
</comment>
<comment type="subunit">
    <molecule>Helicase nsp10</molecule>
    <text evidence="31">Interacts with host DDX18; this interaction redistributes host DDX18 to the cytoplasm (PubMed:28648849).</text>
</comment>
<comment type="subunit">
    <molecule>Uridylate-specific endoribonuclease nsp11</molecule>
    <text evidence="32">Interacts with host OTULIN (PubMed:29444948).</text>
</comment>
<comment type="subunit">
    <molecule>Non-structural protein 12</molecule>
    <text evidence="33">Interacts with host LGALS3 (PubMed:29920289).</text>
</comment>
<comment type="interaction">
    <interactant intactId="EBI-11701979">
        <id>PRO_0000036687</id>
    </interactant>
    <interactant intactId="EBI-11702079">
        <id>A0A068CA64</id>
        <label>AIFM1</label>
    </interactant>
    <organismsDiffer>true</organismsDiffer>
    <experiments>2</experiments>
</comment>
<comment type="interaction">
    <interactant intactId="EBI-11701979">
        <id>PRO_0000036687</id>
    </interactant>
    <interactant intactId="EBI-11702016">
        <id>A5D9M6</id>
        <label>BAG6</label>
    </interactant>
    <organismsDiffer>true</organismsDiffer>
    <experiments>2</experiments>
</comment>
<comment type="subcellular location">
    <molecule>Nsp1</molecule>
    <subcellularLocation>
        <location evidence="21">Host nucleus</location>
    </subcellularLocation>
    <subcellularLocation>
        <location evidence="21">Host cytoplasm</location>
    </subcellularLocation>
</comment>
<comment type="subcellular location">
    <molecule>Nsp1-alpha papain-like cysteine proteinase</molecule>
    <subcellularLocation>
        <location evidence="21 30">Host nucleus</location>
    </subcellularLocation>
    <subcellularLocation>
        <location evidence="21 30">Host cytoplasm</location>
    </subcellularLocation>
</comment>
<comment type="subcellular location">
    <molecule>Nsp1-beta papain-like cysteine proteinase</molecule>
    <subcellularLocation>
        <location evidence="21 30">Host nucleus</location>
    </subcellularLocation>
    <subcellularLocation>
        <location evidence="3">Host cytoplasm</location>
    </subcellularLocation>
    <text evidence="3">Accumulates mainly in the host cytoplasm in early infection and then mostly in the host nucleus.</text>
</comment>
<comment type="subcellular location">
    <molecule>Nsp2 cysteine proteinase</molecule>
    <subcellularLocation>
        <location evidence="31">Host cytoplasm</location>
    </subcellularLocation>
    <subcellularLocation>
        <location evidence="36">Host membrane</location>
        <topology evidence="36">Multi-pass membrane protein</topology>
    </subcellularLocation>
</comment>
<comment type="subcellular location">
    <molecule>Non-structural protein 3</molecule>
    <subcellularLocation>
        <location evidence="36">Host membrane</location>
        <topology evidence="36">Multi-pass membrane protein</topology>
    </subcellularLocation>
</comment>
<comment type="subcellular location">
    <molecule>Non-structural protein 5-6-7</molecule>
    <subcellularLocation>
        <location evidence="20">Host endoplasmic reticulum</location>
    </subcellularLocation>
    <subcellularLocation>
        <location evidence="36">Host membrane</location>
        <topology evidence="36">Multi-pass membrane protein</topology>
    </subcellularLocation>
</comment>
<comment type="subcellular location">
    <molecule>Serine protease nsp4</molecule>
    <subcellularLocation>
        <location evidence="36">Host cytoplasm</location>
    </subcellularLocation>
</comment>
<comment type="subcellular location">
    <molecule>RNA-directed RNA polymerase</molecule>
    <subcellularLocation>
        <location evidence="25">Host cytoplasm</location>
    </subcellularLocation>
    <subcellularLocation>
        <location evidence="36">Host cytoplasm</location>
        <location evidence="36">Host perinuclear region</location>
    </subcellularLocation>
</comment>
<comment type="subcellular location">
    <molecule>Helicase nsp10</molecule>
    <subcellularLocation>
        <location evidence="31">Host cytoplasm</location>
    </subcellularLocation>
    <subcellularLocation>
        <location evidence="36">Host cytoplasm</location>
        <location evidence="36">Host perinuclear region</location>
    </subcellularLocation>
</comment>
<comment type="subcellular location">
    <molecule>Uridylate-specific endoribonuclease nsp11</molecule>
    <subcellularLocation>
        <location evidence="32">Host cytoplasm</location>
    </subcellularLocation>
    <subcellularLocation>
        <location evidence="32">Host nucleus</location>
    </subcellularLocation>
</comment>
<comment type="subcellular location">
    <molecule>Non-structural protein 12</molecule>
    <subcellularLocation>
        <location evidence="33">Host cytoplasm</location>
    </subcellularLocation>
</comment>
<comment type="alternative products">
    <event type="ribosomal frameshifting"/>
    <isoform>
        <id>Q04561-1</id>
        <name>Replicase polyprotein 1ab</name>
        <name>pp1ab</name>
        <sequence type="displayed"/>
    </isoform>
    <isoform>
        <id>Q04561-2</id>
        <name>Replicase polyprotein 1a</name>
        <name>pp1a</name>
        <name>ORF1a polyprotein</name>
        <sequence type="described" ref="VSP_032892"/>
    </isoform>
    <isoform>
        <id>P0DJZ9-1</id>
        <name>Replicase polyprotein 1TF</name>
        <sequence type="external"/>
    </isoform>
</comment>
<comment type="domain">
    <text evidence="1">The hydrophobic domains (HD) could mediate the membrane association of the replication complex and thereby alter the architecture of the host cell membrane.</text>
</comment>
<comment type="domain">
    <text evidence="1">The OTU-like region is responsible for the deubiquitinating and deISGylation activities of Nsp2.</text>
</comment>
<comment type="PTM">
    <molecule>Replicase polyprotein 1ab</molecule>
    <text evidence="6">Specific enzymatic cleavages in vivo by its own proteases yield mature proteins. Nsp1 is autocleaved into two subunits, Nsp1-alpha and Nsp1-beta. There are two alternative pathways for processing. Either nsp4-5 is cleaved, which represents the major pathway or the nsp5-6 and nsp6-7 are processed, which represents the minor pathway. The major pathway occurs when nsp2 acts as a cofactor for nsp4.</text>
</comment>
<comment type="miscellaneous">
    <molecule>Isoform Replicase polyprotein 1ab</molecule>
    <text>Produced by -1 ribosomal frameshifting at the 1a-1b genes boundary.</text>
</comment>
<comment type="miscellaneous">
    <molecule>Isoform Replicase polyprotein 1a</molecule>
    <text evidence="36">Produced by conventional translation.</text>
</comment>
<comment type="similarity">
    <text evidence="36">Belongs to the arteriviridae polyprotein family.</text>
</comment>
<comment type="sequence caution" evidence="36">
    <conflict type="erroneous initiation">
        <sequence resource="EMBL-CDS" id="AAA46273"/>
    </conflict>
</comment>
<comment type="sequence caution" evidence="36">
    <conflict type="erroneous initiation">
        <sequence resource="EMBL-CDS" id="AAA46274"/>
    </conflict>
</comment>
<protein>
    <recommendedName>
        <fullName>Replicase polyprotein 1ab</fullName>
    </recommendedName>
    <alternativeName>
        <fullName>ORF1ab polyprotein</fullName>
    </alternativeName>
    <component>
        <recommendedName>
            <fullName>Nsp1</fullName>
            <ecNumber>3.4.22.-</ecNumber>
        </recommendedName>
    </component>
    <component>
        <recommendedName>
            <fullName>Nsp1-alpha papain-like cysteine proteinase</fullName>
            <ecNumber>3.4.22.-</ecNumber>
        </recommendedName>
        <alternativeName>
            <fullName>PCP1-alpha</fullName>
        </alternativeName>
    </component>
    <component>
        <recommendedName>
            <fullName>Nsp1-beta papain-like cysteine proteinase</fullName>
            <ecNumber>3.4.22.-</ecNumber>
        </recommendedName>
        <alternativeName>
            <fullName>PCP1-beta</fullName>
        </alternativeName>
    </component>
    <component>
        <recommendedName>
            <fullName>Nsp2 cysteine proteinase</fullName>
            <ecNumber>3.4.19.12</ecNumber>
            <ecNumber>3.4.22.-</ecNumber>
        </recommendedName>
        <alternativeName>
            <fullName>CP2</fullName>
            <shortName>CP</shortName>
        </alternativeName>
    </component>
    <component>
        <recommendedName>
            <fullName>Non-structural protein 3</fullName>
            <shortName>Nsp3</shortName>
        </recommendedName>
    </component>
    <component>
        <recommendedName>
            <fullName>Serine protease nsp4</fullName>
            <shortName>3CLSP</shortName>
            <ecNumber evidence="23">3.4.21.-</ecNumber>
        </recommendedName>
        <alternativeName>
            <fullName>3C-like serine proteinase</fullName>
        </alternativeName>
        <alternativeName>
            <fullName>Nsp4</fullName>
        </alternativeName>
    </component>
    <component>
        <recommendedName>
            <fullName>Non-structural protein 5-6-7</fullName>
            <shortName>Nsp5-6-7</shortName>
        </recommendedName>
    </component>
    <component>
        <recommendedName>
            <fullName>Non-structural protein 5</fullName>
            <shortName>Nsp5</shortName>
        </recommendedName>
    </component>
    <component>
        <recommendedName>
            <fullName>Non-structural protein 6</fullName>
            <shortName>Nsp6</shortName>
        </recommendedName>
    </component>
    <component>
        <recommendedName>
            <fullName>Non-structural protein 7-alpha</fullName>
            <shortName>Nsp7-alpha</shortName>
        </recommendedName>
    </component>
    <component>
        <recommendedName>
            <fullName>Non-structural protein 7-beta</fullName>
            <shortName>Nsp7-beta</shortName>
        </recommendedName>
    </component>
    <component>
        <recommendedName>
            <fullName>Non-structural protein 8</fullName>
            <shortName>Nsp8</shortName>
        </recommendedName>
    </component>
    <component>
        <recommendedName>
            <fullName>RNA-directed RNA polymerase</fullName>
            <shortName>Pol</shortName>
            <shortName>RdRp</shortName>
            <ecNumber>2.7.7.48</ecNumber>
        </recommendedName>
        <alternativeName>
            <fullName>Nsp9</fullName>
        </alternativeName>
    </component>
    <component>
        <recommendedName>
            <fullName>Helicase nsp10</fullName>
            <shortName>Hel</shortName>
            <ecNumber>3.6.4.12</ecNumber>
            <ecNumber>3.6.4.13</ecNumber>
        </recommendedName>
        <alternativeName>
            <fullName>Nsp10</fullName>
        </alternativeName>
    </component>
    <component>
        <recommendedName>
            <fullName>Uridylate-specific endoribonuclease nsp11</fullName>
            <ecNumber>4.6.1.-</ecNumber>
        </recommendedName>
        <alternativeName>
            <fullName>Non-structural protein 11</fullName>
            <shortName>Nsp11</shortName>
        </alternativeName>
    </component>
    <component>
        <recommendedName>
            <fullName>Non-structural protein 12</fullName>
            <shortName>Nsp12</shortName>
        </recommendedName>
    </component>
</protein>
<name>RPOA_PRRSL</name>